<gene>
    <name evidence="1" type="primary">rpsE</name>
    <name type="ordered locus">BG0507</name>
</gene>
<keyword id="KW-0687">Ribonucleoprotein</keyword>
<keyword id="KW-0689">Ribosomal protein</keyword>
<keyword id="KW-0694">RNA-binding</keyword>
<keyword id="KW-0699">rRNA-binding</keyword>
<comment type="function">
    <text evidence="1">With S4 and S12 plays an important role in translational accuracy.</text>
</comment>
<comment type="function">
    <text evidence="1">Located at the back of the 30S subunit body where it stabilizes the conformation of the head with respect to the body.</text>
</comment>
<comment type="subunit">
    <text evidence="1">Part of the 30S ribosomal subunit. Contacts proteins S4 and S8.</text>
</comment>
<comment type="domain">
    <text>The N-terminal domain interacts with the head of the 30S subunit; the C-terminal domain interacts with the body and contacts protein S4. The interaction surface between S4 and S5 is involved in control of translational fidelity.</text>
</comment>
<comment type="similarity">
    <text evidence="1">Belongs to the universal ribosomal protein uS5 family.</text>
</comment>
<name>RS5_BORGP</name>
<reference key="1">
    <citation type="journal article" date="2004" name="Nucleic Acids Res.">
        <title>Comparative analysis of the Borrelia garinii genome.</title>
        <authorList>
            <person name="Gloeckner G."/>
            <person name="Lehmann R."/>
            <person name="Romualdi A."/>
            <person name="Pradella S."/>
            <person name="Schulte-Spechtel U."/>
            <person name="Schilhabel M."/>
            <person name="Wilske B."/>
            <person name="Suehnel J."/>
            <person name="Platzer M."/>
        </authorList>
    </citation>
    <scope>NUCLEOTIDE SEQUENCE [LARGE SCALE GENOMIC DNA]</scope>
    <source>
        <strain>ATCC BAA-2496 / DSM 23469 / PBi</strain>
    </source>
</reference>
<dbReference type="EMBL" id="CP000013">
    <property type="protein sequence ID" value="AAU07346.1"/>
    <property type="molecule type" value="Genomic_DNA"/>
</dbReference>
<dbReference type="RefSeq" id="WP_011193812.1">
    <property type="nucleotide sequence ID" value="NZ_CP028872.1"/>
</dbReference>
<dbReference type="SMR" id="Q661C5"/>
<dbReference type="GeneID" id="45161289"/>
<dbReference type="KEGG" id="bga:BG0507"/>
<dbReference type="eggNOG" id="COG0098">
    <property type="taxonomic scope" value="Bacteria"/>
</dbReference>
<dbReference type="HOGENOM" id="CLU_065898_2_2_12"/>
<dbReference type="OrthoDB" id="9809045at2"/>
<dbReference type="Proteomes" id="UP000002276">
    <property type="component" value="Chromosome"/>
</dbReference>
<dbReference type="GO" id="GO:0015935">
    <property type="term" value="C:small ribosomal subunit"/>
    <property type="evidence" value="ECO:0007669"/>
    <property type="project" value="InterPro"/>
</dbReference>
<dbReference type="GO" id="GO:0019843">
    <property type="term" value="F:rRNA binding"/>
    <property type="evidence" value="ECO:0007669"/>
    <property type="project" value="UniProtKB-UniRule"/>
</dbReference>
<dbReference type="GO" id="GO:0003735">
    <property type="term" value="F:structural constituent of ribosome"/>
    <property type="evidence" value="ECO:0007669"/>
    <property type="project" value="InterPro"/>
</dbReference>
<dbReference type="GO" id="GO:0006412">
    <property type="term" value="P:translation"/>
    <property type="evidence" value="ECO:0007669"/>
    <property type="project" value="UniProtKB-UniRule"/>
</dbReference>
<dbReference type="FunFam" id="3.30.160.20:FF:000001">
    <property type="entry name" value="30S ribosomal protein S5"/>
    <property type="match status" value="1"/>
</dbReference>
<dbReference type="FunFam" id="3.30.230.10:FF:000002">
    <property type="entry name" value="30S ribosomal protein S5"/>
    <property type="match status" value="1"/>
</dbReference>
<dbReference type="Gene3D" id="3.30.160.20">
    <property type="match status" value="1"/>
</dbReference>
<dbReference type="Gene3D" id="3.30.230.10">
    <property type="match status" value="1"/>
</dbReference>
<dbReference type="HAMAP" id="MF_01307_B">
    <property type="entry name" value="Ribosomal_uS5_B"/>
    <property type="match status" value="1"/>
</dbReference>
<dbReference type="InterPro" id="IPR020568">
    <property type="entry name" value="Ribosomal_Su5_D2-typ_SF"/>
</dbReference>
<dbReference type="InterPro" id="IPR000851">
    <property type="entry name" value="Ribosomal_uS5"/>
</dbReference>
<dbReference type="InterPro" id="IPR005712">
    <property type="entry name" value="Ribosomal_uS5_bac-type"/>
</dbReference>
<dbReference type="InterPro" id="IPR005324">
    <property type="entry name" value="Ribosomal_uS5_C"/>
</dbReference>
<dbReference type="InterPro" id="IPR013810">
    <property type="entry name" value="Ribosomal_uS5_N"/>
</dbReference>
<dbReference type="InterPro" id="IPR018192">
    <property type="entry name" value="Ribosomal_uS5_N_CS"/>
</dbReference>
<dbReference type="InterPro" id="IPR014721">
    <property type="entry name" value="Ribsml_uS5_D2-typ_fold_subgr"/>
</dbReference>
<dbReference type="NCBIfam" id="TIGR01021">
    <property type="entry name" value="rpsE_bact"/>
    <property type="match status" value="1"/>
</dbReference>
<dbReference type="PANTHER" id="PTHR48277">
    <property type="entry name" value="MITOCHONDRIAL RIBOSOMAL PROTEIN S5"/>
    <property type="match status" value="1"/>
</dbReference>
<dbReference type="PANTHER" id="PTHR48277:SF1">
    <property type="entry name" value="MITOCHONDRIAL RIBOSOMAL PROTEIN S5"/>
    <property type="match status" value="1"/>
</dbReference>
<dbReference type="Pfam" id="PF00333">
    <property type="entry name" value="Ribosomal_S5"/>
    <property type="match status" value="1"/>
</dbReference>
<dbReference type="Pfam" id="PF03719">
    <property type="entry name" value="Ribosomal_S5_C"/>
    <property type="match status" value="1"/>
</dbReference>
<dbReference type="SUPFAM" id="SSF54768">
    <property type="entry name" value="dsRNA-binding domain-like"/>
    <property type="match status" value="1"/>
</dbReference>
<dbReference type="SUPFAM" id="SSF54211">
    <property type="entry name" value="Ribosomal protein S5 domain 2-like"/>
    <property type="match status" value="1"/>
</dbReference>
<dbReference type="PROSITE" id="PS00585">
    <property type="entry name" value="RIBOSOMAL_S5"/>
    <property type="match status" value="1"/>
</dbReference>
<dbReference type="PROSITE" id="PS50881">
    <property type="entry name" value="S5_DSRBD"/>
    <property type="match status" value="1"/>
</dbReference>
<protein>
    <recommendedName>
        <fullName evidence="1">Small ribosomal subunit protein uS5</fullName>
    </recommendedName>
    <alternativeName>
        <fullName evidence="2">30S ribosomal protein S5</fullName>
    </alternativeName>
</protein>
<organism>
    <name type="scientific">Borrelia garinii subsp. bavariensis (strain ATCC BAA-2496 / DSM 23469 / PBi)</name>
    <name type="common">Borreliella bavariensis</name>
    <dbReference type="NCBI Taxonomy" id="290434"/>
    <lineage>
        <taxon>Bacteria</taxon>
        <taxon>Pseudomonadati</taxon>
        <taxon>Spirochaetota</taxon>
        <taxon>Spirochaetia</taxon>
        <taxon>Spirochaetales</taxon>
        <taxon>Borreliaceae</taxon>
        <taxon>Borreliella</taxon>
    </lineage>
</organism>
<accession>Q661C5</accession>
<evidence type="ECO:0000255" key="1">
    <source>
        <dbReference type="HAMAP-Rule" id="MF_01307"/>
    </source>
</evidence>
<evidence type="ECO:0000305" key="2"/>
<feature type="chain" id="PRO_0000131478" description="Small ribosomal subunit protein uS5">
    <location>
        <begin position="1"/>
        <end position="166"/>
    </location>
</feature>
<feature type="domain" description="S5 DRBM" evidence="1">
    <location>
        <begin position="10"/>
        <end position="73"/>
    </location>
</feature>
<proteinExistence type="inferred from homology"/>
<sequence>MVDVQAQRKQIEKLISLNRVTKVVKGGRRFSFAAFMVVGDGEGYVGWGFGKANDASDAIKKSLTSARKNLRFVPIRKGTLPHEVIGCFKKAKVLIKPATHGTGVIAGGPVRAVMEALGVHDILSKSLGSNNSMNVVKATFKAFDLVLNAEKVAEMRGKKTLKTLWG</sequence>